<comment type="function">
    <text evidence="6">May play a role as a scaffolding protein that may be associated with the abnormal phenotype of leukemia cells. Isoform 2 may possess an antiapoptotic effect and protect cells during normal cell survival through its regulation of caspases.</text>
</comment>
<comment type="subunit">
    <text evidence="6 7 8">Interacts with PTPN11. Isoform 2 interacts with HIV-1 VPR. Interacts with NOD2 (PubMed:27812135).</text>
</comment>
<comment type="interaction">
    <interactant intactId="EBI-359558">
        <id>Q8IWZ3</id>
    </interactant>
    <interactant intactId="EBI-355098">
        <id>O00221</id>
        <label>NFKBIE</label>
    </interactant>
    <organismsDiffer>false</organismsDiffer>
    <experiments>2</experiments>
</comment>
<comment type="interaction">
    <interactant intactId="EBI-359558">
        <id>Q8IWZ3</id>
    </interactant>
    <interactant intactId="EBI-7445625">
        <id>Q9HC29</id>
        <label>NOD2</label>
    </interactant>
    <organismsDiffer>false</organismsDiffer>
    <experiments>5</experiments>
</comment>
<comment type="interaction">
    <interactant intactId="EBI-1785446">
        <id>Q8IWZ3-1</id>
    </interactant>
    <interactant intactId="EBI-529989">
        <id>Q9NRI5</id>
        <label>DISC1</label>
    </interactant>
    <organismsDiffer>false</organismsDiffer>
    <experiments>6</experiments>
</comment>
<comment type="interaction">
    <interactant intactId="EBI-9641396">
        <id>Q8IWZ3-2</id>
    </interactant>
    <interactant intactId="EBI-930964">
        <id>P54253</id>
        <label>ATXN1</label>
    </interactant>
    <organismsDiffer>false</organismsDiffer>
    <experiments>3</experiments>
</comment>
<comment type="interaction">
    <interactant intactId="EBI-9641396">
        <id>Q8IWZ3-2</id>
    </interactant>
    <interactant intactId="EBI-12275524">
        <id>P23560-2</id>
        <label>BDNF</label>
    </interactant>
    <organismsDiffer>false</organismsDiffer>
    <experiments>3</experiments>
</comment>
<comment type="interaction">
    <interactant intactId="EBI-25833200">
        <id>Q8IWZ3-3</id>
    </interactant>
    <interactant intactId="EBI-930964">
        <id>P54253</id>
        <label>ATXN1</label>
    </interactant>
    <organismsDiffer>false</organismsDiffer>
    <experiments>6</experiments>
</comment>
<comment type="interaction">
    <interactant intactId="EBI-25833200">
        <id>Q8IWZ3-3</id>
    </interactant>
    <interactant intactId="EBI-12275524">
        <id>P23560-2</id>
        <label>BDNF</label>
    </interactant>
    <organismsDiffer>false</organismsDiffer>
    <experiments>3</experiments>
</comment>
<comment type="interaction">
    <interactant intactId="EBI-25833200">
        <id>Q8IWZ3-3</id>
    </interactant>
    <interactant intactId="EBI-1224514">
        <id>P08574</id>
        <label>CYC1</label>
    </interactant>
    <organismsDiffer>false</organismsDiffer>
    <experiments>3</experiments>
</comment>
<comment type="interaction">
    <interactant intactId="EBI-25833200">
        <id>Q8IWZ3-3</id>
    </interactant>
    <interactant intactId="EBI-466029">
        <id>P42858</id>
        <label>HTT</label>
    </interactant>
    <organismsDiffer>false</organismsDiffer>
    <experiments>3</experiments>
</comment>
<comment type="interaction">
    <interactant intactId="EBI-25833200">
        <id>Q8IWZ3-3</id>
    </interactant>
    <interactant intactId="EBI-399080">
        <id>Q92993</id>
        <label>KAT5</label>
    </interactant>
    <organismsDiffer>false</organismsDiffer>
    <experiments>3</experiments>
</comment>
<comment type="interaction">
    <interactant intactId="EBI-25833200">
        <id>Q8IWZ3-3</id>
    </interactant>
    <interactant intactId="EBI-11742507">
        <id>Q8TAP4-4</id>
        <label>LMO3</label>
    </interactant>
    <organismsDiffer>false</organismsDiffer>
    <experiments>3</experiments>
</comment>
<comment type="interaction">
    <interactant intactId="EBI-25833200">
        <id>Q8IWZ3-3</id>
    </interactant>
    <interactant intactId="EBI-9090795">
        <id>Q15047-2</id>
        <label>SETDB1</label>
    </interactant>
    <organismsDiffer>false</organismsDiffer>
    <experiments>3</experiments>
</comment>
<comment type="interaction">
    <interactant intactId="EBI-25833200">
        <id>Q8IWZ3-3</id>
    </interactant>
    <interactant intactId="EBI-359832">
        <id>P61981</id>
        <label>YWHAG</label>
    </interactant>
    <organismsDiffer>false</organismsDiffer>
    <experiments>3</experiments>
</comment>
<comment type="subcellular location">
    <subcellularLocation>
        <location evidence="6 7">Cytoplasm</location>
    </subcellularLocation>
</comment>
<comment type="alternative products">
    <event type="alternative splicing"/>
    <isoform>
        <id>Q8IWZ3-1</id>
        <name>1</name>
        <sequence type="displayed"/>
    </isoform>
    <isoform>
        <id>Q8IWZ3-2</id>
        <name>2</name>
        <name>VBARP-L</name>
        <sequence type="described" ref="VSP_028455 VSP_028456"/>
    </isoform>
    <isoform>
        <id>Q8IWZ3-3</id>
        <name>3</name>
        <sequence type="described" ref="VSP_028452 VSP_028455 VSP_028456"/>
    </isoform>
    <isoform>
        <id>Q8IWZ3-4</id>
        <name>4</name>
        <sequence type="described" ref="VSP_028457 VSP_028458"/>
    </isoform>
    <isoform>
        <id>Q8IWZ3-5</id>
        <name>5</name>
        <sequence type="described" ref="VSP_028453 VSP_028454"/>
    </isoform>
    <isoform>
        <id>Q8IWZ3-6</id>
        <name>6</name>
        <sequence type="described" ref="VSP_044231"/>
    </isoform>
</comment>
<comment type="tissue specificity">
    <text evidence="4 6 7">Ubiquitous with high expression in cervix, spleen and brain. Expressed in hematopoietic cells with increased expression in leukemia cells. Isoform 2 is highly expressed in spleen with almost no expression in muscle and brain.</text>
</comment>
<comment type="similarity">
    <text evidence="14">Belongs to the mask family.</text>
</comment>
<comment type="sequence caution" evidence="14">
    <conflict type="erroneous initiation">
        <sequence resource="EMBL-CDS" id="BAA91417"/>
    </conflict>
    <text>Truncated N-terminus.</text>
</comment>
<comment type="sequence caution" evidence="14">
    <conflict type="erroneous initiation">
        <sequence resource="EMBL-CDS" id="BAB13958"/>
    </conflict>
    <text>Truncated N-terminus.</text>
</comment>
<protein>
    <recommendedName>
        <fullName>Ankyrin repeat and KH domain-containing protein 1</fullName>
    </recommendedName>
    <alternativeName>
        <fullName>HIV-1 Vpr-binding ankyrin repeat protein</fullName>
    </alternativeName>
    <alternativeName>
        <fullName>Multiple ankyrin repeats single KH domain</fullName>
        <shortName>hMASK</shortName>
    </alternativeName>
</protein>
<accession>Q8IWZ3</accession>
<accession>A6NH85</accession>
<accession>Q149P2</accession>
<accession>Q8IWZ2</accession>
<accession>Q8WY90</accession>
<accession>Q96G77</accession>
<accession>Q96GK0</accession>
<accession>Q9H2U0</accession>
<accession>Q9HA95</accession>
<accession>Q9NWG4</accession>
<accession>Q9UPR7</accession>
<keyword id="KW-0007">Acetylation</keyword>
<keyword id="KW-0025">Alternative splicing</keyword>
<keyword id="KW-0040">ANK repeat</keyword>
<keyword id="KW-0175">Coiled coil</keyword>
<keyword id="KW-0963">Cytoplasm</keyword>
<keyword id="KW-0597">Phosphoprotein</keyword>
<keyword id="KW-1267">Proteomics identification</keyword>
<keyword id="KW-1185">Reference proteome</keyword>
<keyword id="KW-0677">Repeat</keyword>
<keyword id="KW-0694">RNA-binding</keyword>
<feature type="chain" id="PRO_0000306326" description="Ankyrin repeat and KH domain-containing protein 1">
    <location>
        <begin position="1"/>
        <end position="2542"/>
    </location>
</feature>
<feature type="repeat" description="ANK 1">
    <location>
        <begin position="204"/>
        <end position="233"/>
    </location>
</feature>
<feature type="repeat" description="ANK 2">
    <location>
        <begin position="237"/>
        <end position="266"/>
    </location>
</feature>
<feature type="repeat" description="ANK 3">
    <location>
        <begin position="271"/>
        <end position="300"/>
    </location>
</feature>
<feature type="repeat" description="ANK 4">
    <location>
        <begin position="304"/>
        <end position="333"/>
    </location>
</feature>
<feature type="repeat" description="ANK 5">
    <location>
        <begin position="337"/>
        <end position="366"/>
    </location>
</feature>
<feature type="repeat" description="ANK 6">
    <location>
        <begin position="371"/>
        <end position="400"/>
    </location>
</feature>
<feature type="repeat" description="ANK 7">
    <location>
        <begin position="404"/>
        <end position="433"/>
    </location>
</feature>
<feature type="repeat" description="ANK 8">
    <location>
        <begin position="437"/>
        <end position="466"/>
    </location>
</feature>
<feature type="repeat" description="ANK 9">
    <location>
        <begin position="470"/>
        <end position="499"/>
    </location>
</feature>
<feature type="repeat" description="ANK 10">
    <location>
        <begin position="504"/>
        <end position="533"/>
    </location>
</feature>
<feature type="repeat" description="ANK 11">
    <location>
        <begin position="534"/>
        <end position="563"/>
    </location>
</feature>
<feature type="repeat" description="ANK 12">
    <location>
        <begin position="567"/>
        <end position="596"/>
    </location>
</feature>
<feature type="repeat" description="ANK 13">
    <location>
        <begin position="600"/>
        <end position="629"/>
    </location>
</feature>
<feature type="repeat" description="ANK 14">
    <location>
        <begin position="634"/>
        <end position="663"/>
    </location>
</feature>
<feature type="repeat" description="ANK 15">
    <location>
        <begin position="667"/>
        <end position="696"/>
    </location>
</feature>
<feature type="repeat" description="ANK 16">
    <location>
        <begin position="1054"/>
        <end position="1083"/>
    </location>
</feature>
<feature type="repeat" description="ANK 17">
    <location>
        <begin position="1087"/>
        <end position="1116"/>
    </location>
</feature>
<feature type="repeat" description="ANK 18">
    <location>
        <begin position="1121"/>
        <end position="1150"/>
    </location>
</feature>
<feature type="repeat" description="ANK 19">
    <location>
        <begin position="1154"/>
        <end position="1183"/>
    </location>
</feature>
<feature type="repeat" description="ANK 20">
    <location>
        <begin position="1189"/>
        <end position="1218"/>
    </location>
</feature>
<feature type="repeat" description="ANK 21">
    <location>
        <begin position="1223"/>
        <end position="1252"/>
    </location>
</feature>
<feature type="repeat" description="ANK 22">
    <location>
        <begin position="1256"/>
        <end position="1285"/>
    </location>
</feature>
<feature type="repeat" description="ANK 23">
    <location>
        <begin position="1291"/>
        <end position="1320"/>
    </location>
</feature>
<feature type="repeat" description="ANK 24">
    <location>
        <begin position="1324"/>
        <end position="1353"/>
    </location>
</feature>
<feature type="repeat" description="ANK 25">
    <location>
        <begin position="1357"/>
        <end position="1386"/>
    </location>
</feature>
<feature type="domain" description="KH" evidence="2">
    <location>
        <begin position="1695"/>
        <end position="1759"/>
    </location>
</feature>
<feature type="region of interest" description="Disordered" evidence="3">
    <location>
        <begin position="1"/>
        <end position="44"/>
    </location>
</feature>
<feature type="region of interest" description="Disordered" evidence="3">
    <location>
        <begin position="50"/>
        <end position="69"/>
    </location>
</feature>
<feature type="region of interest" description="Disordered" evidence="3">
    <location>
        <begin position="1441"/>
        <end position="1517"/>
    </location>
</feature>
<feature type="region of interest" description="Disordered" evidence="3">
    <location>
        <begin position="1534"/>
        <end position="1614"/>
    </location>
</feature>
<feature type="region of interest" description="Disordered" evidence="3">
    <location>
        <begin position="1632"/>
        <end position="1664"/>
    </location>
</feature>
<feature type="region of interest" description="Disordered" evidence="3">
    <location>
        <begin position="1886"/>
        <end position="1923"/>
    </location>
</feature>
<feature type="region of interest" description="Disordered" evidence="3">
    <location>
        <begin position="1987"/>
        <end position="2106"/>
    </location>
</feature>
<feature type="region of interest" description="Disordered" evidence="3">
    <location>
        <begin position="2260"/>
        <end position="2367"/>
    </location>
</feature>
<feature type="coiled-coil region" evidence="1">
    <location>
        <begin position="775"/>
        <end position="852"/>
    </location>
</feature>
<feature type="coiled-coil region" evidence="1">
    <location>
        <begin position="1415"/>
        <end position="1485"/>
    </location>
</feature>
<feature type="compositionally biased region" description="Gly residues" evidence="3">
    <location>
        <begin position="1"/>
        <end position="10"/>
    </location>
</feature>
<feature type="compositionally biased region" description="Low complexity" evidence="3">
    <location>
        <begin position="20"/>
        <end position="29"/>
    </location>
</feature>
<feature type="compositionally biased region" description="Gly residues" evidence="3">
    <location>
        <begin position="57"/>
        <end position="69"/>
    </location>
</feature>
<feature type="compositionally biased region" description="Basic residues" evidence="3">
    <location>
        <begin position="1453"/>
        <end position="1463"/>
    </location>
</feature>
<feature type="compositionally biased region" description="Basic and acidic residues" evidence="3">
    <location>
        <begin position="1464"/>
        <end position="1483"/>
    </location>
</feature>
<feature type="compositionally biased region" description="Acidic residues" evidence="3">
    <location>
        <begin position="1484"/>
        <end position="1502"/>
    </location>
</feature>
<feature type="compositionally biased region" description="Low complexity" evidence="3">
    <location>
        <begin position="1503"/>
        <end position="1517"/>
    </location>
</feature>
<feature type="compositionally biased region" description="Low complexity" evidence="3">
    <location>
        <begin position="1590"/>
        <end position="1603"/>
    </location>
</feature>
<feature type="compositionally biased region" description="Polar residues" evidence="3">
    <location>
        <begin position="1604"/>
        <end position="1614"/>
    </location>
</feature>
<feature type="compositionally biased region" description="Polar residues" evidence="3">
    <location>
        <begin position="1638"/>
        <end position="1664"/>
    </location>
</feature>
<feature type="compositionally biased region" description="Polar residues" evidence="3">
    <location>
        <begin position="1898"/>
        <end position="1922"/>
    </location>
</feature>
<feature type="compositionally biased region" description="Low complexity" evidence="3">
    <location>
        <begin position="1987"/>
        <end position="1996"/>
    </location>
</feature>
<feature type="compositionally biased region" description="Polar residues" evidence="3">
    <location>
        <begin position="1997"/>
        <end position="2019"/>
    </location>
</feature>
<feature type="compositionally biased region" description="Low complexity" evidence="3">
    <location>
        <begin position="2042"/>
        <end position="2077"/>
    </location>
</feature>
<feature type="compositionally biased region" description="Polar residues" evidence="3">
    <location>
        <begin position="2078"/>
        <end position="2106"/>
    </location>
</feature>
<feature type="compositionally biased region" description="Low complexity" evidence="3">
    <location>
        <begin position="2285"/>
        <end position="2308"/>
    </location>
</feature>
<feature type="compositionally biased region" description="Low complexity" evidence="3">
    <location>
        <begin position="2337"/>
        <end position="2349"/>
    </location>
</feature>
<feature type="modified residue" description="N-acetylmethionine" evidence="17">
    <location>
        <position position="1"/>
    </location>
</feature>
<feature type="modified residue" description="Phosphoserine" evidence="16">
    <location>
        <position position="101"/>
    </location>
</feature>
<feature type="modified residue" description="Phosphoserine" evidence="19">
    <location>
        <position position="105"/>
    </location>
</feature>
<feature type="modified residue" description="Phosphoserine" evidence="18">
    <location>
        <position position="803"/>
    </location>
</feature>
<feature type="modified residue" description="Phosphoserine" evidence="18">
    <location>
        <position position="1540"/>
    </location>
</feature>
<feature type="modified residue" description="Phosphothreonine" evidence="18">
    <location>
        <position position="1553"/>
    </location>
</feature>
<feature type="modified residue" description="Phosphoserine" evidence="18">
    <location>
        <position position="1632"/>
    </location>
</feature>
<feature type="modified residue" description="Phosphothreonine" evidence="15 18">
    <location>
        <position position="1653"/>
    </location>
</feature>
<feature type="splice variant" id="VSP_028452" description="In isoform 3." evidence="12">
    <location>
        <begin position="154"/>
        <end position="164"/>
    </location>
</feature>
<feature type="splice variant" id="VSP_028453" description="In isoform 5." evidence="12">
    <original>ANVHATTATGDTALTYACENGHT</original>
    <variation>QAGGHEDYFGGHRSGQASGEGGL</variation>
    <location>
        <begin position="559"/>
        <end position="581"/>
    </location>
</feature>
<feature type="splice variant" id="VSP_028454" description="In isoform 5." evidence="12">
    <location>
        <begin position="582"/>
        <end position="2542"/>
    </location>
</feature>
<feature type="splice variant" id="VSP_028455" description="In isoform 2 and isoform 3." evidence="11 12 13">
    <original>EHESEGGRTPLMKAARAGHLCTVQFLISKGANV</original>
    <variation>DKQEDMKTILEGIDPAKHQVRVAFDACKLLRKE</variation>
    <location>
        <begin position="595"/>
        <end position="627"/>
    </location>
</feature>
<feature type="splice variant" id="VSP_028456" description="In isoform 2 and isoform 3." evidence="11 12 13">
    <location>
        <begin position="628"/>
        <end position="2542"/>
    </location>
</feature>
<feature type="splice variant" id="VSP_028457" description="In isoform 4." evidence="9">
    <original>SS</original>
    <variation>SCDSPIPSVSSGSSSPLSA</variation>
    <location>
        <begin position="2342"/>
        <end position="2343"/>
    </location>
</feature>
<feature type="splice variant" id="VSP_028458" description="In isoform 4." evidence="9">
    <original>IWPGTWAPHIGNMHLKYVN</original>
    <variation>VKWA</variation>
    <location>
        <begin position="2524"/>
        <end position="2542"/>
    </location>
</feature>
<feature type="splice variant" id="VSP_044231" description="In isoform 6." evidence="10">
    <original>IWPGTWAPHIGNMHLKYVN</original>
    <variation>ASLLPSVPALKGEIPSPQLTRPKKRIGRPMVASPNQRHQDHLRPKVPAGVQELTHCPDTPLLPPSDSRGHNSSNSPSLQAGGAEGAGDRGRDTR</variation>
    <location>
        <begin position="2524"/>
        <end position="2542"/>
    </location>
</feature>
<feature type="sequence variant" id="VAR_035291" description="In dbSNP:rs17850570." evidence="5">
    <original>L</original>
    <variation>M</variation>
    <location>
        <position position="175"/>
    </location>
</feature>
<feature type="sequence variant" id="VAR_035292" description="In dbSNP:rs17850572." evidence="5">
    <original>G</original>
    <variation>C</variation>
    <location>
        <position position="228"/>
    </location>
</feature>
<feature type="sequence variant" id="VAR_048281" description="In dbSNP:rs1051309.">
    <original>G</original>
    <variation>S</variation>
    <location>
        <position position="1586"/>
    </location>
</feature>
<feature type="sequence variant" id="VAR_035293" description="In dbSNP:rs3752704.">
    <original>N</original>
    <variation>S</variation>
    <location>
        <position position="1760"/>
    </location>
</feature>
<evidence type="ECO:0000255" key="1"/>
<evidence type="ECO:0000255" key="2">
    <source>
        <dbReference type="PROSITE-ProRule" id="PRU00117"/>
    </source>
</evidence>
<evidence type="ECO:0000256" key="3">
    <source>
        <dbReference type="SAM" id="MobiDB-lite"/>
    </source>
</evidence>
<evidence type="ECO:0000269" key="4">
    <source>
    </source>
</evidence>
<evidence type="ECO:0000269" key="5">
    <source>
    </source>
</evidence>
<evidence type="ECO:0000269" key="6">
    <source>
    </source>
</evidence>
<evidence type="ECO:0000269" key="7">
    <source>
    </source>
</evidence>
<evidence type="ECO:0000269" key="8">
    <source>
    </source>
</evidence>
<evidence type="ECO:0000303" key="9">
    <source>
    </source>
</evidence>
<evidence type="ECO:0000303" key="10">
    <source>
    </source>
</evidence>
<evidence type="ECO:0000303" key="11">
    <source>
    </source>
</evidence>
<evidence type="ECO:0000303" key="12">
    <source>
    </source>
</evidence>
<evidence type="ECO:0000303" key="13">
    <source>
    </source>
</evidence>
<evidence type="ECO:0000305" key="14"/>
<evidence type="ECO:0007744" key="15">
    <source>
    </source>
</evidence>
<evidence type="ECO:0007744" key="16">
    <source>
    </source>
</evidence>
<evidence type="ECO:0007744" key="17">
    <source>
    </source>
</evidence>
<evidence type="ECO:0007744" key="18">
    <source>
    </source>
</evidence>
<evidence type="ECO:0007744" key="19">
    <source>
    </source>
</evidence>
<dbReference type="EMBL" id="AF521882">
    <property type="protein sequence ID" value="AAO14943.1"/>
    <property type="molecule type" value="mRNA"/>
</dbReference>
<dbReference type="EMBL" id="AF521883">
    <property type="protein sequence ID" value="AAO14944.1"/>
    <property type="molecule type" value="mRNA"/>
</dbReference>
<dbReference type="EMBL" id="AF258557">
    <property type="protein sequence ID" value="AAG23760.1"/>
    <property type="molecule type" value="mRNA"/>
</dbReference>
<dbReference type="EMBL" id="AC008438">
    <property type="status" value="NOT_ANNOTATED_CDS"/>
    <property type="molecule type" value="Genomic_DNA"/>
</dbReference>
<dbReference type="EMBL" id="AC011399">
    <property type="status" value="NOT_ANNOTATED_CDS"/>
    <property type="molecule type" value="Genomic_DNA"/>
</dbReference>
<dbReference type="EMBL" id="CH471062">
    <property type="protein sequence ID" value="EAW62055.1"/>
    <property type="molecule type" value="Genomic_DNA"/>
</dbReference>
<dbReference type="EMBL" id="CH471062">
    <property type="protein sequence ID" value="EAW62058.1"/>
    <property type="molecule type" value="Genomic_DNA"/>
</dbReference>
<dbReference type="EMBL" id="BC004457">
    <property type="protein sequence ID" value="AAH04457.2"/>
    <property type="molecule type" value="mRNA"/>
</dbReference>
<dbReference type="EMBL" id="BC009420">
    <property type="protein sequence ID" value="AAH09420.1"/>
    <property type="molecule type" value="mRNA"/>
</dbReference>
<dbReference type="EMBL" id="BC009909">
    <property type="protein sequence ID" value="AAH09909.1"/>
    <property type="molecule type" value="mRNA"/>
</dbReference>
<dbReference type="EMBL" id="BC117677">
    <property type="protein sequence ID" value="AAI17678.1"/>
    <property type="molecule type" value="mRNA"/>
</dbReference>
<dbReference type="EMBL" id="BC117678">
    <property type="protein sequence ID" value="AAI17679.1"/>
    <property type="molecule type" value="mRNA"/>
</dbReference>
<dbReference type="EMBL" id="BC127127">
    <property type="protein sequence ID" value="AAI27128.1"/>
    <property type="molecule type" value="mRNA"/>
</dbReference>
<dbReference type="EMBL" id="BC150486">
    <property type="protein sequence ID" value="AAI50487.1"/>
    <property type="molecule type" value="mRNA"/>
</dbReference>
<dbReference type="EMBL" id="AK000904">
    <property type="protein sequence ID" value="BAA91417.1"/>
    <property type="status" value="ALT_INIT"/>
    <property type="molecule type" value="mRNA"/>
</dbReference>
<dbReference type="EMBL" id="AK022041">
    <property type="protein sequence ID" value="BAB13958.1"/>
    <property type="status" value="ALT_INIT"/>
    <property type="molecule type" value="mRNA"/>
</dbReference>
<dbReference type="EMBL" id="AF217646">
    <property type="protein sequence ID" value="AAG41779.1"/>
    <property type="molecule type" value="mRNA"/>
</dbReference>
<dbReference type="EMBL" id="AB029008">
    <property type="protein sequence ID" value="BAA83037.1"/>
    <property type="molecule type" value="mRNA"/>
</dbReference>
<dbReference type="CCDS" id="CCDS4225.1">
    <molecule id="Q8IWZ3-1"/>
</dbReference>
<dbReference type="CCDS" id="CCDS43371.1">
    <molecule id="Q8IWZ3-2"/>
</dbReference>
<dbReference type="CCDS" id="CCDS43372.1">
    <molecule id="Q8IWZ3-3"/>
</dbReference>
<dbReference type="CCDS" id="CCDS75319.1">
    <molecule id="Q8IWZ3-5"/>
</dbReference>
<dbReference type="RefSeq" id="NP_001183959.1">
    <molecule id="Q8IWZ3-5"/>
    <property type="nucleotide sequence ID" value="NM_001197030.2"/>
</dbReference>
<dbReference type="RefSeq" id="NP_060217.1">
    <molecule id="Q8IWZ3-1"/>
    <property type="nucleotide sequence ID" value="NM_017747.3"/>
</dbReference>
<dbReference type="RefSeq" id="NP_060448.1">
    <molecule id="Q8IWZ3-3"/>
    <property type="nucleotide sequence ID" value="NM_017978.3"/>
</dbReference>
<dbReference type="RefSeq" id="NP_065741.3">
    <molecule id="Q8IWZ3-6"/>
    <property type="nucleotide sequence ID" value="NM_020690.5"/>
</dbReference>
<dbReference type="RefSeq" id="NP_078944.2">
    <molecule id="Q8IWZ3-2"/>
    <property type="nucleotide sequence ID" value="NM_024668.3"/>
</dbReference>
<dbReference type="SMR" id="Q8IWZ3"/>
<dbReference type="BioGRID" id="120230">
    <property type="interactions" value="257"/>
</dbReference>
<dbReference type="BioGRID" id="135698">
    <property type="interactions" value="117"/>
</dbReference>
<dbReference type="DIP" id="DIP-36371N"/>
<dbReference type="FunCoup" id="Q8IWZ3">
    <property type="interactions" value="2857"/>
</dbReference>
<dbReference type="IntAct" id="Q8IWZ3">
    <property type="interactions" value="157"/>
</dbReference>
<dbReference type="MINT" id="Q8IWZ3"/>
<dbReference type="STRING" id="9606.ENSP00000354085"/>
<dbReference type="GlyCosmos" id="Q8IWZ3">
    <property type="glycosylation" value="19 sites, 2 glycans"/>
</dbReference>
<dbReference type="GlyGen" id="Q8IWZ3">
    <property type="glycosylation" value="35 sites, 2 N-linked glycans (2 sites), 2 O-linked glycans (31 sites)"/>
</dbReference>
<dbReference type="iPTMnet" id="Q8IWZ3"/>
<dbReference type="PhosphoSitePlus" id="Q8IWZ3"/>
<dbReference type="SwissPalm" id="Q8IWZ3"/>
<dbReference type="BioMuta" id="ANKHD1"/>
<dbReference type="DMDM" id="74750718"/>
<dbReference type="jPOST" id="Q8IWZ3"/>
<dbReference type="MassIVE" id="Q8IWZ3"/>
<dbReference type="PaxDb" id="9606-ENSP00000354085"/>
<dbReference type="PeptideAtlas" id="Q8IWZ3"/>
<dbReference type="ProteomicsDB" id="70934"/>
<dbReference type="ProteomicsDB" id="70935">
    <molecule id="Q8IWZ3-1"/>
</dbReference>
<dbReference type="ProteomicsDB" id="70936">
    <molecule id="Q8IWZ3-2"/>
</dbReference>
<dbReference type="ProteomicsDB" id="70937">
    <molecule id="Q8IWZ3-3"/>
</dbReference>
<dbReference type="ProteomicsDB" id="70938">
    <molecule id="Q8IWZ3-4"/>
</dbReference>
<dbReference type="ProteomicsDB" id="70939">
    <molecule id="Q8IWZ3-5"/>
</dbReference>
<dbReference type="Pumba" id="Q8IWZ3"/>
<dbReference type="Antibodypedia" id="1444">
    <property type="antibodies" value="148 antibodies from 25 providers"/>
</dbReference>
<dbReference type="DNASU" id="404734"/>
<dbReference type="DNASU" id="54882"/>
<dbReference type="Ensembl" id="ENST00000360839.7">
    <molecule id="Q8IWZ3-1"/>
    <property type="protein sequence ID" value="ENSP00000354085.2"/>
    <property type="gene ID" value="ENSG00000131503.21"/>
</dbReference>
<dbReference type="Ensembl" id="ENST00000394722.7">
    <molecule id="Q8IWZ3-3"/>
    <property type="protein sequence ID" value="ENSP00000378211.3"/>
    <property type="gene ID" value="ENSG00000131503.21"/>
</dbReference>
<dbReference type="Ensembl" id="ENST00000394723.7">
    <molecule id="Q8IWZ3-2"/>
    <property type="protein sequence ID" value="ENSP00000378212.3"/>
    <property type="gene ID" value="ENSG00000131503.21"/>
</dbReference>
<dbReference type="Ensembl" id="ENST00000616482.4">
    <molecule id="Q8IWZ3-5"/>
    <property type="protein sequence ID" value="ENSP00000478529.1"/>
    <property type="gene ID" value="ENSG00000131503.21"/>
</dbReference>
<dbReference type="GeneID" id="54882"/>
<dbReference type="KEGG" id="hsa:404734"/>
<dbReference type="KEGG" id="hsa:54882"/>
<dbReference type="MANE-Select" id="ENST00000360839.7">
    <property type="protein sequence ID" value="ENSP00000354085.2"/>
    <property type="RefSeq nucleotide sequence ID" value="NM_017747.3"/>
    <property type="RefSeq protein sequence ID" value="NP_060217.1"/>
</dbReference>
<dbReference type="UCSC" id="uc003lfo.4">
    <molecule id="Q8IWZ3-1"/>
    <property type="organism name" value="human"/>
</dbReference>
<dbReference type="AGR" id="HGNC:24714"/>
<dbReference type="AGR" id="HGNC:33530"/>
<dbReference type="CTD" id="404734"/>
<dbReference type="CTD" id="54882"/>
<dbReference type="DisGeNET" id="404734"/>
<dbReference type="DisGeNET" id="54882"/>
<dbReference type="GeneCards" id="ANKHD1"/>
<dbReference type="HGNC" id="HGNC:24714">
    <property type="gene designation" value="ANKHD1"/>
</dbReference>
<dbReference type="HPA" id="ENSG00000131503">
    <property type="expression patterns" value="Low tissue specificity"/>
</dbReference>
<dbReference type="MIM" id="610500">
    <property type="type" value="gene"/>
</dbReference>
<dbReference type="neXtProt" id="NX_Q8IWZ3"/>
<dbReference type="OpenTargets" id="ENSG00000131503"/>
<dbReference type="PharmGKB" id="PA134947858"/>
<dbReference type="PharmGKB" id="PA162376432"/>
<dbReference type="VEuPathDB" id="HostDB:ENSG00000131503"/>
<dbReference type="eggNOG" id="KOG0504">
    <property type="taxonomic scope" value="Eukaryota"/>
</dbReference>
<dbReference type="eggNOG" id="KOG4369">
    <property type="taxonomic scope" value="Eukaryota"/>
</dbReference>
<dbReference type="GeneTree" id="ENSGT00940000153768"/>
<dbReference type="HOGENOM" id="CLU_000590_0_1_1"/>
<dbReference type="InParanoid" id="Q8IWZ3"/>
<dbReference type="OMA" id="XLPSIDP"/>
<dbReference type="OrthoDB" id="10071877at2759"/>
<dbReference type="PAN-GO" id="Q8IWZ3">
    <property type="GO annotations" value="2 GO annotations based on evolutionary models"/>
</dbReference>
<dbReference type="PhylomeDB" id="Q8IWZ3"/>
<dbReference type="TreeFam" id="TF328552"/>
<dbReference type="PathwayCommons" id="Q8IWZ3"/>
<dbReference type="SignaLink" id="Q8IWZ3"/>
<dbReference type="BioGRID-ORCS" id="404734">
    <property type="hits" value="41 hits in 1086 CRISPR screens"/>
</dbReference>
<dbReference type="BioGRID-ORCS" id="54882">
    <property type="hits" value="21 hits in 766 CRISPR screens"/>
</dbReference>
<dbReference type="CD-CODE" id="232F8A39">
    <property type="entry name" value="P-body"/>
</dbReference>
<dbReference type="CD-CODE" id="DEE660B4">
    <property type="entry name" value="Stress granule"/>
</dbReference>
<dbReference type="ChiTaRS" id="ANKHD1">
    <property type="organism name" value="human"/>
</dbReference>
<dbReference type="GeneWiki" id="ANKHD1"/>
<dbReference type="Pharos" id="Q8IWZ3">
    <property type="development level" value="Tbio"/>
</dbReference>
<dbReference type="PRO" id="PR:Q8IWZ3"/>
<dbReference type="Proteomes" id="UP000005640">
    <property type="component" value="Chromosome 5"/>
</dbReference>
<dbReference type="RNAct" id="Q8IWZ3">
    <property type="molecule type" value="protein"/>
</dbReference>
<dbReference type="Bgee" id="ENSG00000131503">
    <property type="expression patterns" value="Expressed in sural nerve and 149 other cell types or tissues"/>
</dbReference>
<dbReference type="ExpressionAtlas" id="Q8IWZ3">
    <property type="expression patterns" value="baseline and differential"/>
</dbReference>
<dbReference type="GO" id="GO:0005737">
    <property type="term" value="C:cytoplasm"/>
    <property type="evidence" value="ECO:0000318"/>
    <property type="project" value="GO_Central"/>
</dbReference>
<dbReference type="GO" id="GO:0003723">
    <property type="term" value="F:RNA binding"/>
    <property type="evidence" value="ECO:0007005"/>
    <property type="project" value="UniProtKB"/>
</dbReference>
<dbReference type="GO" id="GO:0045087">
    <property type="term" value="P:innate immune response"/>
    <property type="evidence" value="ECO:0000318"/>
    <property type="project" value="GO_Central"/>
</dbReference>
<dbReference type="CDD" id="cd22503">
    <property type="entry name" value="KH-I_ANKHD1"/>
    <property type="match status" value="1"/>
</dbReference>
<dbReference type="FunFam" id="1.25.40.20:FF:000046">
    <property type="entry name" value="Ankyrin repeat and KH domain-containing protein 1"/>
    <property type="match status" value="1"/>
</dbReference>
<dbReference type="FunFam" id="1.25.40.20:FF:000114">
    <property type="entry name" value="ankyrin repeat and KH domain-containing protein 1 isoform X2"/>
    <property type="match status" value="1"/>
</dbReference>
<dbReference type="FunFam" id="3.30.1370.10:FF:000029">
    <property type="entry name" value="ankyrin repeat and KH domain-containing protein 1 isoform X2"/>
    <property type="match status" value="1"/>
</dbReference>
<dbReference type="FunFam" id="1.25.40.20:FF:000156">
    <property type="entry name" value="ankyrin repeat and KH domain-containing protein 1-like isoform X6"/>
    <property type="match status" value="1"/>
</dbReference>
<dbReference type="FunFam" id="1.25.40.20:FF:000012">
    <property type="entry name" value="ankyrin repeat domain-containing protein 17 isoform X1"/>
    <property type="match status" value="1"/>
</dbReference>
<dbReference type="FunFam" id="1.25.40.20:FF:000014">
    <property type="entry name" value="ankyrin repeat domain-containing protein 17 isoform X2"/>
    <property type="match status" value="1"/>
</dbReference>
<dbReference type="FunFam" id="1.25.40.20:FF:000055">
    <property type="entry name" value="ankyrin repeat domain-containing protein 17 isoform X2"/>
    <property type="match status" value="1"/>
</dbReference>
<dbReference type="FunFam" id="1.25.40.20:FF:000068">
    <property type="entry name" value="ankyrin repeat domain-containing protein 17 isoform X5"/>
    <property type="match status" value="1"/>
</dbReference>
<dbReference type="Gene3D" id="1.25.40.20">
    <property type="entry name" value="Ankyrin repeat-containing domain"/>
    <property type="match status" value="8"/>
</dbReference>
<dbReference type="Gene3D" id="3.30.1370.10">
    <property type="entry name" value="K Homology domain, type 1"/>
    <property type="match status" value="1"/>
</dbReference>
<dbReference type="InterPro" id="IPR051631">
    <property type="entry name" value="Ankyrin-KH/SAM_domain"/>
</dbReference>
<dbReference type="InterPro" id="IPR002110">
    <property type="entry name" value="Ankyrin_rpt"/>
</dbReference>
<dbReference type="InterPro" id="IPR036770">
    <property type="entry name" value="Ankyrin_rpt-contain_sf"/>
</dbReference>
<dbReference type="InterPro" id="IPR047374">
    <property type="entry name" value="KH-I_ANKHD1"/>
</dbReference>
<dbReference type="InterPro" id="IPR004087">
    <property type="entry name" value="KH_dom"/>
</dbReference>
<dbReference type="InterPro" id="IPR004088">
    <property type="entry name" value="KH_dom_type_1"/>
</dbReference>
<dbReference type="InterPro" id="IPR036612">
    <property type="entry name" value="KH_dom_type_1_sf"/>
</dbReference>
<dbReference type="PANTHER" id="PTHR23206:SF5">
    <property type="entry name" value="ANKYRIN REPEAT AND KH DOMAIN-CONTAINING PROTEIN 1"/>
    <property type="match status" value="1"/>
</dbReference>
<dbReference type="PANTHER" id="PTHR23206">
    <property type="entry name" value="MASK PROTEIN"/>
    <property type="match status" value="1"/>
</dbReference>
<dbReference type="Pfam" id="PF12796">
    <property type="entry name" value="Ank_2"/>
    <property type="match status" value="9"/>
</dbReference>
<dbReference type="Pfam" id="PF13637">
    <property type="entry name" value="Ank_4"/>
    <property type="match status" value="1"/>
</dbReference>
<dbReference type="Pfam" id="PF00013">
    <property type="entry name" value="KH_1"/>
    <property type="match status" value="1"/>
</dbReference>
<dbReference type="PRINTS" id="PR01415">
    <property type="entry name" value="ANKYRIN"/>
</dbReference>
<dbReference type="SMART" id="SM00248">
    <property type="entry name" value="ANK"/>
    <property type="match status" value="25"/>
</dbReference>
<dbReference type="SMART" id="SM00322">
    <property type="entry name" value="KH"/>
    <property type="match status" value="1"/>
</dbReference>
<dbReference type="SUPFAM" id="SSF48403">
    <property type="entry name" value="Ankyrin repeat"/>
    <property type="match status" value="3"/>
</dbReference>
<dbReference type="SUPFAM" id="SSF54791">
    <property type="entry name" value="Eukaryotic type KH-domain (KH-domain type I)"/>
    <property type="match status" value="1"/>
</dbReference>
<dbReference type="PROSITE" id="PS50297">
    <property type="entry name" value="ANK_REP_REGION"/>
    <property type="match status" value="1"/>
</dbReference>
<dbReference type="PROSITE" id="PS50088">
    <property type="entry name" value="ANK_REPEAT"/>
    <property type="match status" value="20"/>
</dbReference>
<dbReference type="PROSITE" id="PS50084">
    <property type="entry name" value="KH_TYPE_1"/>
    <property type="match status" value="1"/>
</dbReference>
<gene>
    <name type="primary">ANKHD1</name>
    <name type="synonym">KIAA1085</name>
    <name type="synonym">MASK</name>
    <name type="synonym">VBARP</name>
    <name type="ORF">PP2500</name>
</gene>
<organism>
    <name type="scientific">Homo sapiens</name>
    <name type="common">Human</name>
    <dbReference type="NCBI Taxonomy" id="9606"/>
    <lineage>
        <taxon>Eukaryota</taxon>
        <taxon>Metazoa</taxon>
        <taxon>Chordata</taxon>
        <taxon>Craniata</taxon>
        <taxon>Vertebrata</taxon>
        <taxon>Euteleostomi</taxon>
        <taxon>Mammalia</taxon>
        <taxon>Eutheria</taxon>
        <taxon>Euarchontoglires</taxon>
        <taxon>Primates</taxon>
        <taxon>Haplorrhini</taxon>
        <taxon>Catarrhini</taxon>
        <taxon>Hominidae</taxon>
        <taxon>Homo</taxon>
    </lineage>
</organism>
<proteinExistence type="evidence at protein level"/>
<reference key="1">
    <citation type="journal article" date="2003" name="J. Biol. Chem.">
        <title>Gene fusion and overlapping reading frames in the mammalian genes for 4E-BP3 and MASK.</title>
        <authorList>
            <person name="Poulin F."/>
            <person name="Brueschke A."/>
            <person name="Sonenberg N."/>
        </authorList>
    </citation>
    <scope>NUCLEOTIDE SEQUENCE [MRNA] (ISOFORMS 1 AND 6)</scope>
    <scope>TISSUE SPECIFICITY</scope>
</reference>
<reference key="2">
    <citation type="journal article" date="2004" name="Proc. Natl. Acad. Sci. U.S.A.">
        <title>Large-scale cDNA transfection screening for genes related to cancer development and progression.</title>
        <authorList>
            <person name="Wan D."/>
            <person name="Gong Y."/>
            <person name="Qin W."/>
            <person name="Zhang P."/>
            <person name="Li J."/>
            <person name="Wei L."/>
            <person name="Zhou X."/>
            <person name="Li H."/>
            <person name="Qiu X."/>
            <person name="Zhong F."/>
            <person name="He L."/>
            <person name="Yu J."/>
            <person name="Yao G."/>
            <person name="Jiang H."/>
            <person name="Qian L."/>
            <person name="Yu Y."/>
            <person name="Shu H."/>
            <person name="Chen X."/>
            <person name="Xu H."/>
            <person name="Guo M."/>
            <person name="Pan Z."/>
            <person name="Chen Y."/>
            <person name="Ge C."/>
            <person name="Yang S."/>
            <person name="Gu J."/>
        </authorList>
    </citation>
    <scope>NUCLEOTIDE SEQUENCE [LARGE SCALE MRNA] (ISOFORM 2)</scope>
</reference>
<reference key="3">
    <citation type="journal article" date="2004" name="Nature">
        <title>The DNA sequence and comparative analysis of human chromosome 5.</title>
        <authorList>
            <person name="Schmutz J."/>
            <person name="Martin J."/>
            <person name="Terry A."/>
            <person name="Couronne O."/>
            <person name="Grimwood J."/>
            <person name="Lowry S."/>
            <person name="Gordon L.A."/>
            <person name="Scott D."/>
            <person name="Xie G."/>
            <person name="Huang W."/>
            <person name="Hellsten U."/>
            <person name="Tran-Gyamfi M."/>
            <person name="She X."/>
            <person name="Prabhakar S."/>
            <person name="Aerts A."/>
            <person name="Altherr M."/>
            <person name="Bajorek E."/>
            <person name="Black S."/>
            <person name="Branscomb E."/>
            <person name="Caoile C."/>
            <person name="Challacombe J.F."/>
            <person name="Chan Y.M."/>
            <person name="Denys M."/>
            <person name="Detter J.C."/>
            <person name="Escobar J."/>
            <person name="Flowers D."/>
            <person name="Fotopulos D."/>
            <person name="Glavina T."/>
            <person name="Gomez M."/>
            <person name="Gonzales E."/>
            <person name="Goodstein D."/>
            <person name="Grigoriev I."/>
            <person name="Groza M."/>
            <person name="Hammon N."/>
            <person name="Hawkins T."/>
            <person name="Haydu L."/>
            <person name="Israni S."/>
            <person name="Jett J."/>
            <person name="Kadner K."/>
            <person name="Kimball H."/>
            <person name="Kobayashi A."/>
            <person name="Lopez F."/>
            <person name="Lou Y."/>
            <person name="Martinez D."/>
            <person name="Medina C."/>
            <person name="Morgan J."/>
            <person name="Nandkeshwar R."/>
            <person name="Noonan J.P."/>
            <person name="Pitluck S."/>
            <person name="Pollard M."/>
            <person name="Predki P."/>
            <person name="Priest J."/>
            <person name="Ramirez L."/>
            <person name="Retterer J."/>
            <person name="Rodriguez A."/>
            <person name="Rogers S."/>
            <person name="Salamov A."/>
            <person name="Salazar A."/>
            <person name="Thayer N."/>
            <person name="Tice H."/>
            <person name="Tsai M."/>
            <person name="Ustaszewska A."/>
            <person name="Vo N."/>
            <person name="Wheeler J."/>
            <person name="Wu K."/>
            <person name="Yang J."/>
            <person name="Dickson M."/>
            <person name="Cheng J.-F."/>
            <person name="Eichler E.E."/>
            <person name="Olsen A."/>
            <person name="Pennacchio L.A."/>
            <person name="Rokhsar D.S."/>
            <person name="Richardson P."/>
            <person name="Lucas S.M."/>
            <person name="Myers R.M."/>
            <person name="Rubin E.M."/>
        </authorList>
    </citation>
    <scope>NUCLEOTIDE SEQUENCE [LARGE SCALE GENOMIC DNA]</scope>
</reference>
<reference key="4">
    <citation type="submission" date="2005-09" db="EMBL/GenBank/DDBJ databases">
        <authorList>
            <person name="Mural R.J."/>
            <person name="Istrail S."/>
            <person name="Sutton G.G."/>
            <person name="Florea L."/>
            <person name="Halpern A.L."/>
            <person name="Mobarry C.M."/>
            <person name="Lippert R."/>
            <person name="Walenz B."/>
            <person name="Shatkay H."/>
            <person name="Dew I."/>
            <person name="Miller J.R."/>
            <person name="Flanigan M.J."/>
            <person name="Edwards N.J."/>
            <person name="Bolanos R."/>
            <person name="Fasulo D."/>
            <person name="Halldorsson B.V."/>
            <person name="Hannenhalli S."/>
            <person name="Turner R."/>
            <person name="Yooseph S."/>
            <person name="Lu F."/>
            <person name="Nusskern D.R."/>
            <person name="Shue B.C."/>
            <person name="Zheng X.H."/>
            <person name="Zhong F."/>
            <person name="Delcher A.L."/>
            <person name="Huson D.H."/>
            <person name="Kravitz S.A."/>
            <person name="Mouchard L."/>
            <person name="Reinert K."/>
            <person name="Remington K.A."/>
            <person name="Clark A.G."/>
            <person name="Waterman M.S."/>
            <person name="Eichler E.E."/>
            <person name="Adams M.D."/>
            <person name="Hunkapiller M.W."/>
            <person name="Myers E.W."/>
            <person name="Venter J.C."/>
        </authorList>
    </citation>
    <scope>NUCLEOTIDE SEQUENCE [LARGE SCALE GENOMIC DNA]</scope>
</reference>
<reference key="5">
    <citation type="journal article" date="2004" name="Genome Res.">
        <title>The status, quality, and expansion of the NIH full-length cDNA project: the Mammalian Gene Collection (MGC).</title>
        <authorList>
            <consortium name="The MGC Project Team"/>
        </authorList>
    </citation>
    <scope>NUCLEOTIDE SEQUENCE [LARGE SCALE MRNA] (ISOFORMS 2; 3 AND 5)</scope>
    <scope>VARIANTS MET-175 AND CYS-228</scope>
    <source>
        <tissue>Lung</tissue>
    </source>
</reference>
<reference key="6">
    <citation type="journal article" date="2004" name="Nat. Genet.">
        <title>Complete sequencing and characterization of 21,243 full-length human cDNAs.</title>
        <authorList>
            <person name="Ota T."/>
            <person name="Suzuki Y."/>
            <person name="Nishikawa T."/>
            <person name="Otsuki T."/>
            <person name="Sugiyama T."/>
            <person name="Irie R."/>
            <person name="Wakamatsu A."/>
            <person name="Hayashi K."/>
            <person name="Sato H."/>
            <person name="Nagai K."/>
            <person name="Kimura K."/>
            <person name="Makita H."/>
            <person name="Sekine M."/>
            <person name="Obayashi M."/>
            <person name="Nishi T."/>
            <person name="Shibahara T."/>
            <person name="Tanaka T."/>
            <person name="Ishii S."/>
            <person name="Yamamoto J."/>
            <person name="Saito K."/>
            <person name="Kawai Y."/>
            <person name="Isono Y."/>
            <person name="Nakamura Y."/>
            <person name="Nagahari K."/>
            <person name="Murakami K."/>
            <person name="Yasuda T."/>
            <person name="Iwayanagi T."/>
            <person name="Wagatsuma M."/>
            <person name="Shiratori A."/>
            <person name="Sudo H."/>
            <person name="Hosoiri T."/>
            <person name="Kaku Y."/>
            <person name="Kodaira H."/>
            <person name="Kondo H."/>
            <person name="Sugawara M."/>
            <person name="Takahashi M."/>
            <person name="Kanda K."/>
            <person name="Yokoi T."/>
            <person name="Furuya T."/>
            <person name="Kikkawa E."/>
            <person name="Omura Y."/>
            <person name="Abe K."/>
            <person name="Kamihara K."/>
            <person name="Katsuta N."/>
            <person name="Sato K."/>
            <person name="Tanikawa M."/>
            <person name="Yamazaki M."/>
            <person name="Ninomiya K."/>
            <person name="Ishibashi T."/>
            <person name="Yamashita H."/>
            <person name="Murakawa K."/>
            <person name="Fujimori K."/>
            <person name="Tanai H."/>
            <person name="Kimata M."/>
            <person name="Watanabe M."/>
            <person name="Hiraoka S."/>
            <person name="Chiba Y."/>
            <person name="Ishida S."/>
            <person name="Ono Y."/>
            <person name="Takiguchi S."/>
            <person name="Watanabe S."/>
            <person name="Yosida M."/>
            <person name="Hotuta T."/>
            <person name="Kusano J."/>
            <person name="Kanehori K."/>
            <person name="Takahashi-Fujii A."/>
            <person name="Hara H."/>
            <person name="Tanase T.-O."/>
            <person name="Nomura Y."/>
            <person name="Togiya S."/>
            <person name="Komai F."/>
            <person name="Hara R."/>
            <person name="Takeuchi K."/>
            <person name="Arita M."/>
            <person name="Imose N."/>
            <person name="Musashino K."/>
            <person name="Yuuki H."/>
            <person name="Oshima A."/>
            <person name="Sasaki N."/>
            <person name="Aotsuka S."/>
            <person name="Yoshikawa Y."/>
            <person name="Matsunawa H."/>
            <person name="Ichihara T."/>
            <person name="Shiohata N."/>
            <person name="Sano S."/>
            <person name="Moriya S."/>
            <person name="Momiyama H."/>
            <person name="Satoh N."/>
            <person name="Takami S."/>
            <person name="Terashima Y."/>
            <person name="Suzuki O."/>
            <person name="Nakagawa S."/>
            <person name="Senoh A."/>
            <person name="Mizoguchi H."/>
            <person name="Goto Y."/>
            <person name="Shimizu F."/>
            <person name="Wakebe H."/>
            <person name="Hishigaki H."/>
            <person name="Watanabe T."/>
            <person name="Sugiyama A."/>
            <person name="Takemoto M."/>
            <person name="Kawakami B."/>
            <person name="Yamazaki M."/>
            <person name="Watanabe K."/>
            <person name="Kumagai A."/>
            <person name="Itakura S."/>
            <person name="Fukuzumi Y."/>
            <person name="Fujimori Y."/>
            <person name="Komiyama M."/>
            <person name="Tashiro H."/>
            <person name="Tanigami A."/>
            <person name="Fujiwara T."/>
            <person name="Ono T."/>
            <person name="Yamada K."/>
            <person name="Fujii Y."/>
            <person name="Ozaki K."/>
            <person name="Hirao M."/>
            <person name="Ohmori Y."/>
            <person name="Kawabata A."/>
            <person name="Hikiji T."/>
            <person name="Kobatake N."/>
            <person name="Inagaki H."/>
            <person name="Ikema Y."/>
            <person name="Okamoto S."/>
            <person name="Okitani R."/>
            <person name="Kawakami T."/>
            <person name="Noguchi S."/>
            <person name="Itoh T."/>
            <person name="Shigeta K."/>
            <person name="Senba T."/>
            <person name="Matsumura K."/>
            <person name="Nakajima Y."/>
            <person name="Mizuno T."/>
            <person name="Morinaga M."/>
            <person name="Sasaki M."/>
            <person name="Togashi T."/>
            <person name="Oyama M."/>
            <person name="Hata H."/>
            <person name="Watanabe M."/>
            <person name="Komatsu T."/>
            <person name="Mizushima-Sugano J."/>
            <person name="Satoh T."/>
            <person name="Shirai Y."/>
            <person name="Takahashi Y."/>
            <person name="Nakagawa K."/>
            <person name="Okumura K."/>
            <person name="Nagase T."/>
            <person name="Nomura N."/>
            <person name="Kikuchi H."/>
            <person name="Masuho Y."/>
            <person name="Yamashita R."/>
            <person name="Nakai K."/>
            <person name="Yada T."/>
            <person name="Nakamura Y."/>
            <person name="Ohara O."/>
            <person name="Isogai T."/>
            <person name="Sugano S."/>
        </authorList>
    </citation>
    <scope>NUCLEOTIDE SEQUENCE [LARGE SCALE MRNA] OF 670-1189 (ISOFORM 1)</scope>
    <scope>NUCLEOTIDE SEQUENCE [LARGE SCALE MRNA] OF 105-2542 (ISOFORM 2)</scope>
    <source>
        <tissue>Embryo</tissue>
    </source>
</reference>
<reference key="7">
    <citation type="submission" date="1999-12" db="EMBL/GenBank/DDBJ databases">
        <title>A novel protein with ten ankyrin repeats.</title>
        <authorList>
            <person name="Cheng C.M."/>
            <person name="Yuo C.Y."/>
        </authorList>
    </citation>
    <scope>NUCLEOTIDE SEQUENCE [MRNA] OF 924-1455 (ISOFORM 1)</scope>
</reference>
<reference key="8">
    <citation type="journal article" date="1999" name="DNA Res.">
        <title>Prediction of the coding sequences of unidentified human genes. XIV. The complete sequences of 100 new cDNA clones from brain which code for large proteins in vitro.</title>
        <authorList>
            <person name="Kikuno R."/>
            <person name="Nagase T."/>
            <person name="Ishikawa K."/>
            <person name="Hirosawa M."/>
            <person name="Miyajima N."/>
            <person name="Tanaka A."/>
            <person name="Kotani H."/>
            <person name="Nomura N."/>
            <person name="Ohara O."/>
        </authorList>
    </citation>
    <scope>NUCLEOTIDE SEQUENCE [LARGE SCALE MRNA] OF 1961-2542 (ISOFORM 4)</scope>
    <source>
        <tissue>Brain</tissue>
    </source>
</reference>
<reference key="9">
    <citation type="journal article" date="2005" name="FEBS J.">
        <title>Molecular and functional characterization of a novel splice variant of ANKHD1 that lacks the KH domain and its role in cell survival and apoptosis.</title>
        <authorList>
            <person name="Miles M.C."/>
            <person name="Janket M.L."/>
            <person name="Wheeler E.D."/>
            <person name="Chattopadhyay A."/>
            <person name="Majumder B."/>
            <person name="Dericco J."/>
            <person name="Schafer E.A."/>
            <person name="Ayyavoo V."/>
        </authorList>
    </citation>
    <scope>INTERACTION WITH HIV-1 VPR</scope>
    <scope>FUNCTION</scope>
    <scope>SUBCELLULAR LOCATION</scope>
    <scope>TISSUE SPECIFICITY</scope>
</reference>
<reference key="10">
    <citation type="journal article" date="2006" name="Biochim. Biophys. Acta">
        <title>ANKHD1, ankyrin repeat and KH domain containing 1, is overexpressed in acute leukemias and is associated with SHP2 in K562 cells.</title>
        <authorList>
            <person name="Traina F."/>
            <person name="Favaro P.M.B."/>
            <person name="Medina Sde S."/>
            <person name="Duarte Ada S."/>
            <person name="Winnischofer S.M."/>
            <person name="Costa F.F."/>
            <person name="Saad S.T.O."/>
        </authorList>
    </citation>
    <scope>TISSUE SPECIFICITY</scope>
    <scope>SUBCELLULAR LOCATION</scope>
    <scope>INTERACTION WITH PTPN11</scope>
</reference>
<reference key="11">
    <citation type="journal article" date="2006" name="Nat. Biotechnol.">
        <title>A probability-based approach for high-throughput protein phosphorylation analysis and site localization.</title>
        <authorList>
            <person name="Beausoleil S.A."/>
            <person name="Villen J."/>
            <person name="Gerber S.A."/>
            <person name="Rush J."/>
            <person name="Gygi S.P."/>
        </authorList>
    </citation>
    <scope>IDENTIFICATION BY MASS SPECTROMETRY [LARGE SCALE ANALYSIS]</scope>
    <source>
        <tissue>Cervix carcinoma</tissue>
    </source>
</reference>
<reference key="12">
    <citation type="journal article" date="2008" name="Proc. Natl. Acad. Sci. U.S.A.">
        <title>A quantitative atlas of mitotic phosphorylation.</title>
        <authorList>
            <person name="Dephoure N."/>
            <person name="Zhou C."/>
            <person name="Villen J."/>
            <person name="Beausoleil S.A."/>
            <person name="Bakalarski C.E."/>
            <person name="Elledge S.J."/>
            <person name="Gygi S.P."/>
        </authorList>
    </citation>
    <scope>PHOSPHORYLATION [LARGE SCALE ANALYSIS] AT THR-1653</scope>
    <scope>IDENTIFICATION BY MASS SPECTROMETRY [LARGE SCALE ANALYSIS]</scope>
    <source>
        <tissue>Cervix carcinoma</tissue>
    </source>
</reference>
<reference key="13">
    <citation type="journal article" date="2009" name="Anal. Chem.">
        <title>Lys-N and trypsin cover complementary parts of the phosphoproteome in a refined SCX-based approach.</title>
        <authorList>
            <person name="Gauci S."/>
            <person name="Helbig A.O."/>
            <person name="Slijper M."/>
            <person name="Krijgsveld J."/>
            <person name="Heck A.J."/>
            <person name="Mohammed S."/>
        </authorList>
    </citation>
    <scope>IDENTIFICATION BY MASS SPECTROMETRY [LARGE SCALE ANALYSIS]</scope>
</reference>
<reference key="14">
    <citation type="journal article" date="2009" name="Sci. Signal.">
        <title>Quantitative phosphoproteomic analysis of T cell receptor signaling reveals system-wide modulation of protein-protein interactions.</title>
        <authorList>
            <person name="Mayya V."/>
            <person name="Lundgren D.H."/>
            <person name="Hwang S.-I."/>
            <person name="Rezaul K."/>
            <person name="Wu L."/>
            <person name="Eng J.K."/>
            <person name="Rodionov V."/>
            <person name="Han D.K."/>
        </authorList>
    </citation>
    <scope>PHOSPHORYLATION [LARGE SCALE ANALYSIS] AT SER-101</scope>
    <scope>IDENTIFICATION BY MASS SPECTROMETRY [LARGE SCALE ANALYSIS]</scope>
    <source>
        <tissue>Leukemic T-cell</tissue>
    </source>
</reference>
<reference key="15">
    <citation type="journal article" date="2011" name="BMC Syst. Biol.">
        <title>Initial characterization of the human central proteome.</title>
        <authorList>
            <person name="Burkard T.R."/>
            <person name="Planyavsky M."/>
            <person name="Kaupe I."/>
            <person name="Breitwieser F.P."/>
            <person name="Buerckstuemmer T."/>
            <person name="Bennett K.L."/>
            <person name="Superti-Furga G."/>
            <person name="Colinge J."/>
        </authorList>
    </citation>
    <scope>IDENTIFICATION BY MASS SPECTROMETRY [LARGE SCALE ANALYSIS]</scope>
</reference>
<reference key="16">
    <citation type="journal article" date="2011" name="Sci. Signal.">
        <title>System-wide temporal characterization of the proteome and phosphoproteome of human embryonic stem cell differentiation.</title>
        <authorList>
            <person name="Rigbolt K.T."/>
            <person name="Prokhorova T.A."/>
            <person name="Akimov V."/>
            <person name="Henningsen J."/>
            <person name="Johansen P.T."/>
            <person name="Kratchmarova I."/>
            <person name="Kassem M."/>
            <person name="Mann M."/>
            <person name="Olsen J.V."/>
            <person name="Blagoev B."/>
        </authorList>
    </citation>
    <scope>IDENTIFICATION BY MASS SPECTROMETRY [LARGE SCALE ANALYSIS]</scope>
</reference>
<reference key="17">
    <citation type="journal article" date="2012" name="Proc. Natl. Acad. Sci. U.S.A.">
        <title>N-terminal acetylome analyses and functional insights of the N-terminal acetyltransferase NatB.</title>
        <authorList>
            <person name="Van Damme P."/>
            <person name="Lasa M."/>
            <person name="Polevoda B."/>
            <person name="Gazquez C."/>
            <person name="Elosegui-Artola A."/>
            <person name="Kim D.S."/>
            <person name="De Juan-Pardo E."/>
            <person name="Demeyer K."/>
            <person name="Hole K."/>
            <person name="Larrea E."/>
            <person name="Timmerman E."/>
            <person name="Prieto J."/>
            <person name="Arnesen T."/>
            <person name="Sherman F."/>
            <person name="Gevaert K."/>
            <person name="Aldabe R."/>
        </authorList>
    </citation>
    <scope>ACETYLATION [LARGE SCALE ANALYSIS] AT MET-1</scope>
    <scope>IDENTIFICATION BY MASS SPECTROMETRY [LARGE SCALE ANALYSIS]</scope>
</reference>
<reference key="18">
    <citation type="journal article" date="2013" name="J. Proteome Res.">
        <title>Toward a comprehensive characterization of a human cancer cell phosphoproteome.</title>
        <authorList>
            <person name="Zhou H."/>
            <person name="Di Palma S."/>
            <person name="Preisinger C."/>
            <person name="Peng M."/>
            <person name="Polat A.N."/>
            <person name="Heck A.J."/>
            <person name="Mohammed S."/>
        </authorList>
    </citation>
    <scope>PHOSPHORYLATION [LARGE SCALE ANALYSIS] AT SER-803; SER-1540; THR-1553; SER-1632 AND THR-1653</scope>
    <scope>IDENTIFICATION BY MASS SPECTROMETRY [LARGE SCALE ANALYSIS]</scope>
    <source>
        <tissue>Cervix carcinoma</tissue>
        <tissue>Erythroleukemia</tissue>
    </source>
</reference>
<reference key="19">
    <citation type="journal article" date="2014" name="J. Proteomics">
        <title>An enzyme assisted RP-RPLC approach for in-depth analysis of human liver phosphoproteome.</title>
        <authorList>
            <person name="Bian Y."/>
            <person name="Song C."/>
            <person name="Cheng K."/>
            <person name="Dong M."/>
            <person name="Wang F."/>
            <person name="Huang J."/>
            <person name="Sun D."/>
            <person name="Wang L."/>
            <person name="Ye M."/>
            <person name="Zou H."/>
        </authorList>
    </citation>
    <scope>PHOSPHORYLATION [LARGE SCALE ANALYSIS] AT SER-105</scope>
    <scope>IDENTIFICATION BY MASS SPECTROMETRY [LARGE SCALE ANALYSIS]</scope>
    <source>
        <tissue>Liver</tissue>
    </source>
</reference>
<reference key="20">
    <citation type="journal article" date="2016" name="PLoS ONE">
        <title>Characterization and Genetic Analyses of New Genes Coding for NOD2 Interacting Proteins.</title>
        <authorList>
            <person name="Thiebaut R."/>
            <person name="Esmiol S."/>
            <person name="Lecine P."/>
            <person name="Mahfouz B."/>
            <person name="Hermant A."/>
            <person name="Nicoletti C."/>
            <person name="Parnis S."/>
            <person name="Perroy J."/>
            <person name="Borg J.P."/>
            <person name="Pascoe L."/>
            <person name="Hugot J.P."/>
            <person name="Ollendorff V."/>
        </authorList>
    </citation>
    <scope>INTERACTION WITH NOD2</scope>
</reference>
<name>ANKH1_HUMAN</name>
<sequence length="2542" mass="269458">MLTDSGGGGTSFEEDLDSVAPRSAPAGASEPPPPGGVGLGIRTVRLFGEAGPASGVGSSGGGGSGSGTGGGDAALDFKLAAAVLRTGGGGGASGSDEDEVSEVESFILDQEDLDNPVLKTTSEIFLSSTAEGADLRTVDPETQARLEALLEAAGIGKLSTADGKAFADPEVLRRLTSSVSCALDEAAAALTRMKAENSHNAGQVDTRSLAEACSDGDVNAVRKLLDEGRSVNEHTEEGESLLCLACSAGYYELAQVLLAMHANVEDRGNKGDITPLMAASSGGYLDIVKLLLLHDADVNSQSATGNTALTYACAGGFVDIVKVLLNEGANIEDHNENGHTPLMEAASAGHVEVARVLLDHGAGINTHSNEFKESALTLACYKGHLDMVRFLLEAGADQEHKTDEMHTALMEACMDGHVEVARLLLDSGAQVNMPADSFESPLTLAACGGHVELAALLIERGANLEEVNDEGYTPLMEAAREGHEEMVALLLAQGANINAQTEETQETALTLACCGGFSEVADFLIKAGADIELGCSTPLMEASQEGHLELVKYLLASGANVHATTATGDTALTYACENGHTDVADVLLQAGADLEHESEGGRTPLMKAARAGHLCTVQFLISKGANVNRATANNDHTVVSLACAGGHLAVVELLLAHGADPTHRLKDGSTMLIEAAKGGHTNVVSYLLDYPNNVLSVPTTDVSQLPPPSQDQSQVPRVPTHTLAMVVPPQEPDRTSQENSPALLGVQKGTSKQKSSSLQVADQDLLPSFHPYQPLECIVEETEGKLNELGQRISAIEKAQLKSLELIQGEPLNKDKIEELKKNREEQVQKKKKILKELQKVERQLQMKTQQQFTKEYLETKGQKDTVSLHQQCSHRGVFPEGEGDGSLPEDHFSELPQVDTILFKDNDVDDEQQSPPSAEQIDFVPVQPLSSPQCNFSSDLGSNGTNSLELQKVSGNQQIVGQPQIAITGHDQGLLVQEPDGLMVATPAQTLTDTLDDLIAAVSTRVPTGSNSSSQTTECLTPESCSQTTSNVASQSMPPVYPSVDIDAHTESNHDTALTLACAGGHEELVSVLIARDAKIEHRDKKGFTPLILAATAGHVGVVEILLDKGGDIEAQSERTKDTPLSLACSGGRQEVVDLLLARGANKEHRNVSDYTPLSLAASGGYVNIIKILLNAGAEINSRTGSKLGISPLMLAAMNGHVPAVKLLLDMGSDINAQIETNRNTALTLACFQGRAEVVSLLLDRKANVEHRAKTGLTPLMEAASGGYAEVGRVLLDKGADVNAPPVPSSRDTALTIAADKGHYKFCELLIHRGAHIDVRNKKGNTPLWLASNGGHFDVVQLLVQAGADVDAADNRKITPLMSAFRKGHVKVVQYLVKEVNQFPSDIECMRYIATITDKELLKKCHQCVETIVKAKDQQAAEANKNASILLKELDLEKSREESRKQALAAKREKRKEKRKKKKEEQKRKQEEDEENKPKENSELPEDEDEEENDEDVEQEVPIEPPSATTTTTIGISATSATFTNVFGKKRANVVTTPSTNRKNKKNKTKETPPTAHLILPEQHMSLAQQKADKNKINGEPRGGGAGGNSDSDNLDSTDCNSESSSGGKSQELNFVMDVNSSKYPSLLLHSQEEKTSTATSKTQTRLEGEVTPNSLSTSYKTVSLPLSSPNIKLNLTSPKRGQKREEGWKEVVRRSKKLSVPASVVSRIMGRGGCNITAIQDVTGAHIDVDKQKDKNGERMITIRGGTESTRYAVQLINALIQDPAKELEDLIPKNHIRTPASTKSIHANFSSGVGTTAASSKNAFPLGAPTLVTSQATTLSTFQPANKLNKNVPTNVRSSFPVSLPLAYPHPHFALLAAQTMQQIRHPRLPMAQFGGTFSPSPNTWGPFPVRPVNPGNTNSSPKHNNTSRLPNQNGTVLPSESAGLATASCPITVSSVVAASQQLCVTNTRTPSSVRKQLFACVPKTSPPATVISSVTSTCSSLPSVSSAPITSGQAPTTFLPASTSQAQLSSQKMESFSAVPPTKEKVSTQDQPMANLCTPSSTANSCSSSASNTPGAPETHPSSSPTPTSSNTQEEAQPSSVSDLSPMSMPFASNSEPAPLTLTSPRMVAADNQDTSNLPQLAVPAPRVSHRMQPRGSFYSMVPNATIHQDPQSIFVTNPVTLTPPQGPPAAVQLSSAVNIMNGSQMHINPANKSLPPTFGPATLFNHFSSLFDSSQVPANQGWGDGPLSSRVATDASFTVQSAFLGNSVLGHLENMHPDNSKAPGFRPPSQRVSTSPVGLPSIDPSGSSPSSSSAPLASFSGIPGTRVFLQGPAPVGTPSFNRQHFSPHPWTSASNSSTSAPPTLGQPKGVSASQDRKIPPPIGTERLARIRQGGSVAQAPAGTSFVAPVGHSGIWSFGVNAVSEGLSGWSQSVMGNHPMHQQLSDPSTFSQHQPMERDDSGMVAPSNIFHQPMASGFVDFSKGLPISMYGGTIIPSHPQLADVPGGPLFNGLHNPDPAWNPMIKVIQNSTECTDAQQIWPGTWAPHIGNMHLKYVN</sequence>